<accession>P52544</accession>
<accession>Q9IBR9</accession>
<organism>
    <name type="scientific">Human herpesvirus 6B (strain Z29)</name>
    <name type="common">HHV-6 variant B</name>
    <name type="synonym">Human B lymphotropic virus</name>
    <dbReference type="NCBI Taxonomy" id="36351"/>
    <lineage>
        <taxon>Viruses</taxon>
        <taxon>Duplodnaviria</taxon>
        <taxon>Heunggongvirae</taxon>
        <taxon>Peploviricota</taxon>
        <taxon>Herviviricetes</taxon>
        <taxon>Herpesvirales</taxon>
        <taxon>Orthoherpesviridae</taxon>
        <taxon>Betaherpesvirinae</taxon>
        <taxon>Roseolovirus</taxon>
        <taxon>Roseolovirus humanbeta6b</taxon>
        <taxon>Human herpesvirus 6B</taxon>
    </lineage>
</organism>
<proteinExistence type="inferred from homology"/>
<keyword id="KW-0067">ATP-binding</keyword>
<keyword id="KW-1048">Host nucleus</keyword>
<keyword id="KW-0426">Late protein</keyword>
<keyword id="KW-0479">Metal-binding</keyword>
<keyword id="KW-0547">Nucleotide-binding</keyword>
<keyword id="KW-1185">Reference proteome</keyword>
<keyword id="KW-0231">Viral genome packaging</keyword>
<keyword id="KW-1188">Viral release from host cell</keyword>
<keyword id="KW-0862">Zinc</keyword>
<keyword id="KW-0863">Zinc-finger</keyword>
<name>TRM1_HHV6Z</name>
<dbReference type="EMBL" id="AF157706">
    <property type="protein sequence ID" value="AAD49654.1"/>
    <property type="molecule type" value="Genomic_DNA"/>
</dbReference>
<dbReference type="RefSeq" id="NP_050221.1">
    <property type="nucleotide sequence ID" value="NC_000898.1"/>
</dbReference>
<dbReference type="SMR" id="P52544"/>
<dbReference type="DNASU" id="1497042"/>
<dbReference type="GeneID" id="1497042"/>
<dbReference type="KEGG" id="vg:1497042"/>
<dbReference type="Proteomes" id="UP000006930">
    <property type="component" value="Segment"/>
</dbReference>
<dbReference type="GO" id="GO:0042025">
    <property type="term" value="C:host cell nucleus"/>
    <property type="evidence" value="ECO:0007669"/>
    <property type="project" value="UniProtKB-SubCell"/>
</dbReference>
<dbReference type="GO" id="GO:0005524">
    <property type="term" value="F:ATP binding"/>
    <property type="evidence" value="ECO:0007669"/>
    <property type="project" value="UniProtKB-KW"/>
</dbReference>
<dbReference type="GO" id="GO:0008270">
    <property type="term" value="F:zinc ion binding"/>
    <property type="evidence" value="ECO:0007669"/>
    <property type="project" value="UniProtKB-KW"/>
</dbReference>
<dbReference type="GO" id="GO:0019073">
    <property type="term" value="P:viral DNA genome packaging"/>
    <property type="evidence" value="ECO:0007669"/>
    <property type="project" value="InterPro"/>
</dbReference>
<dbReference type="HAMAP" id="MF_04014">
    <property type="entry name" value="HSV_TRM1"/>
    <property type="match status" value="1"/>
</dbReference>
<dbReference type="InterPro" id="IPR000501">
    <property type="entry name" value="UL28/UL56"/>
</dbReference>
<dbReference type="Pfam" id="PF01366">
    <property type="entry name" value="PRTP"/>
    <property type="match status" value="1"/>
</dbReference>
<gene>
    <name evidence="1" type="primary">TRM1</name>
    <name type="ordered locus">U40</name>
</gene>
<evidence type="ECO:0000255" key="1">
    <source>
        <dbReference type="HAMAP-Rule" id="MF_04014"/>
    </source>
</evidence>
<sequence length="726" mass="83037">MNSLQSLCVLCARLNECALDLECLKFCDPVIVLSDMANFKKNGIVILHLYQTFFEGIKEQNLLCASALTVYMQVLLKAMYEQVLLLDAALESFMVDQDRKKYFEKVLCLKRCAEHLSINISLNNGVEFIVQLSTLNDIEQLISKINSVYALLLPQEGLQICGKIIDLLTIMCGACMVAKPESYLETKTCMKCYEELTLTPNQGKSLRKRLHGKFCNHLTEQKAFFNIEKNIETIEKDLGEAILNYGTIQSVVTEIKKIFKQQRSAESLHVSDAEKTLKKYNIFSKVPDVIYSLSEFTYWSKISETIVRNVAITLQQLNSCHTLYKQLQNDVSLYLYGEVSEDFLALSENLLTHDERLYVGSIYVSPSRLIDLVTGLSIKNLEESPIFKRLAEEDEVQHKIKSLLHDIRDPQTTETPGRLNTINCMLQTHNLQQEVLARKKAYFQKVSESGYNRVMACIREQESLINKVVSVNVYGNFIFEALSKIMNGFVLRKMYLDGSIRVDSCTYDEHLYIKNNLMPKKLPLELLPDLSEIMYTLLTGPLSDFHKSAYPLPANISMAYGCDHAEMLPHMKEDLARCIEGTIHPSVWMVCEYNEFFNFSGVTDVNDMQKKMWNFIRELTLSVALYNDVFGKRLKIVRIDEEEDLNGNVVLTFNHESPLLFHTGGGMTKFKDVYSLLYCDLQAQLSRETVDVPEGVSYSVRTPNLLDLVRENEQDESIIPGCLFDE</sequence>
<reference key="1">
    <citation type="journal article" date="1999" name="J. Virol.">
        <title>Human herpesvirus 6B genome sequence: coding content and comparison with human herpesvirus 6A.</title>
        <authorList>
            <person name="Dominguez G."/>
            <person name="Dambaugh T.R."/>
            <person name="Stamey F.R."/>
            <person name="Dewhurst S."/>
            <person name="Inoue N."/>
            <person name="Pellett P.E."/>
        </authorList>
    </citation>
    <scope>NUCLEOTIDE SEQUENCE [LARGE SCALE GENOMIC DNA]</scope>
</reference>
<reference key="2">
    <citation type="journal article" date="1995" name="J. Virol.">
        <title>Intragenomic linear amplification of human herpesvirus 6B oriLyt suggests acquisition of oriLyt by transposition.</title>
        <authorList>
            <person name="Stamey F.R."/>
            <person name="Dominguez G."/>
            <person name="Black J.B."/>
            <person name="Dambaugh T.R."/>
            <person name="Pellett P.E."/>
        </authorList>
    </citation>
    <scope>NUCLEOTIDE SEQUENCE [GENOMIC DNA] OF 1-410</scope>
</reference>
<organismHost>
    <name type="scientific">Homo sapiens</name>
    <name type="common">Human</name>
    <dbReference type="NCBI Taxonomy" id="9606"/>
</organismHost>
<comment type="function">
    <text evidence="1">Component of the molecular motor that translocates viral genomic DNA in empty capsid during DNA packaging. Forms a tripartite terminase complex together with TRM2 and TRM3 in the host cytoplasm. Once the complex reaches the host nucleus, it interacts with the capsid portal vertex. This portal forms a ring in which genomic DNA is translocated into the capsid. TRM1 carries an endonuclease activity that plays an important role for the cleavage of concatemeric viral DNA into unit length genomes.</text>
</comment>
<comment type="subunit">
    <text evidence="1">Associates with TRM2 and TRM3 to form the tripartite terminase complex. Interacts with portal protein.</text>
</comment>
<comment type="subcellular location">
    <subcellularLocation>
        <location evidence="1">Host nucleus</location>
    </subcellularLocation>
    <text evidence="1">Found associated with the external surface of the viral capsid during assembly and DNA packaging, but seems absent in extracellular mature virions.</text>
</comment>
<comment type="similarity">
    <text evidence="1">Belongs to the herpesviridae TRM1 protein family.</text>
</comment>
<protein>
    <recommendedName>
        <fullName evidence="1">Tripartite terminase subunit 1</fullName>
    </recommendedName>
</protein>
<feature type="chain" id="PRO_0000115883" description="Tripartite terminase subunit 1">
    <location>
        <begin position="1"/>
        <end position="726"/>
    </location>
</feature>
<feature type="zinc finger region" description="C3H1-type" evidence="1">
    <location>
        <begin position="189"/>
        <end position="217"/>
    </location>
</feature>
<feature type="binding site" evidence="1">
    <location>
        <begin position="626"/>
        <end position="633"/>
    </location>
    <ligand>
        <name>ATP</name>
        <dbReference type="ChEBI" id="CHEBI:30616"/>
    </ligand>
</feature>